<organism>
    <name type="scientific">Pongo abelii</name>
    <name type="common">Sumatran orangutan</name>
    <name type="synonym">Pongo pygmaeus abelii</name>
    <dbReference type="NCBI Taxonomy" id="9601"/>
    <lineage>
        <taxon>Eukaryota</taxon>
        <taxon>Metazoa</taxon>
        <taxon>Chordata</taxon>
        <taxon>Craniata</taxon>
        <taxon>Vertebrata</taxon>
        <taxon>Euteleostomi</taxon>
        <taxon>Mammalia</taxon>
        <taxon>Eutheria</taxon>
        <taxon>Euarchontoglires</taxon>
        <taxon>Primates</taxon>
        <taxon>Haplorrhini</taxon>
        <taxon>Catarrhini</taxon>
        <taxon>Hominidae</taxon>
        <taxon>Pongo</taxon>
    </lineage>
</organism>
<protein>
    <recommendedName>
        <fullName>MOB-like protein phocein</fullName>
    </recommendedName>
    <alternativeName>
        <fullName>Mob1 homolog 3</fullName>
        <shortName>Mob3</shortName>
    </alternativeName>
    <alternativeName>
        <fullName>Mps one binder kinase activator-like 3</fullName>
    </alternativeName>
    <alternativeName>
        <fullName>Preimplantation protein 3</fullName>
    </alternativeName>
</protein>
<name>PHOCN_PONAB</name>
<keyword id="KW-0025">Alternative splicing</keyword>
<keyword id="KW-0963">Cytoplasm</keyword>
<keyword id="KW-0333">Golgi apparatus</keyword>
<keyword id="KW-0472">Membrane</keyword>
<keyword id="KW-0479">Metal-binding</keyword>
<keyword id="KW-0597">Phosphoprotein</keyword>
<keyword id="KW-1185">Reference proteome</keyword>
<keyword id="KW-0813">Transport</keyword>
<keyword id="KW-0862">Zinc</keyword>
<evidence type="ECO:0000250" key="1"/>
<evidence type="ECO:0000250" key="2">
    <source>
        <dbReference type="UniProtKB" id="Q9Y3A3"/>
    </source>
</evidence>
<evidence type="ECO:0000303" key="3">
    <source ref="1"/>
</evidence>
<evidence type="ECO:0000305" key="4"/>
<accession>Q5RDB1</accession>
<accession>Q5R8K8</accession>
<reference key="1">
    <citation type="submission" date="2004-11" db="EMBL/GenBank/DDBJ databases">
        <authorList>
            <consortium name="The German cDNA consortium"/>
        </authorList>
    </citation>
    <scope>NUCLEOTIDE SEQUENCE [LARGE SCALE MRNA] (ISOFORMS 1 AND 2)</scope>
    <source>
        <tissue>Heart</tissue>
    </source>
</reference>
<proteinExistence type="evidence at transcript level"/>
<dbReference type="EMBL" id="CR858003">
    <property type="protein sequence ID" value="CAH90246.1"/>
    <property type="molecule type" value="mRNA"/>
</dbReference>
<dbReference type="EMBL" id="CR859744">
    <property type="protein sequence ID" value="CAH91902.1"/>
    <property type="molecule type" value="mRNA"/>
</dbReference>
<dbReference type="RefSeq" id="NP_001127258.2">
    <molecule id="Q5RDB1-1"/>
    <property type="nucleotide sequence ID" value="NM_001133786.2"/>
</dbReference>
<dbReference type="RefSeq" id="NP_001128839.2">
    <molecule id="Q5RDB1-2"/>
    <property type="nucleotide sequence ID" value="NM_001135367.2"/>
</dbReference>
<dbReference type="RefSeq" id="XP_009236204.1">
    <property type="nucleotide sequence ID" value="XM_009237929.1"/>
</dbReference>
<dbReference type="SMR" id="Q5RDB1"/>
<dbReference type="FunCoup" id="Q5RDB1">
    <property type="interactions" value="2699"/>
</dbReference>
<dbReference type="STRING" id="9601.ENSPPYP00000014578"/>
<dbReference type="Ensembl" id="ENSPPYT00000015167.3">
    <molecule id="Q5RDB1-2"/>
    <property type="protein sequence ID" value="ENSPPYP00000014578.3"/>
    <property type="gene ID" value="ENSPPYG00000013047.3"/>
</dbReference>
<dbReference type="GeneID" id="100174313"/>
<dbReference type="KEGG" id="pon:100174313"/>
<dbReference type="CTD" id="25843"/>
<dbReference type="eggNOG" id="KOG1852">
    <property type="taxonomic scope" value="Eukaryota"/>
</dbReference>
<dbReference type="GeneTree" id="ENSGT01120000271909"/>
<dbReference type="HOGENOM" id="CLU_056981_3_0_1"/>
<dbReference type="InParanoid" id="Q5RDB1"/>
<dbReference type="OMA" id="ATCTQMT"/>
<dbReference type="OrthoDB" id="184876at2759"/>
<dbReference type="TreeFam" id="TF314078"/>
<dbReference type="Proteomes" id="UP000001595">
    <property type="component" value="Chromosome 2B"/>
</dbReference>
<dbReference type="GO" id="GO:0005737">
    <property type="term" value="C:cytoplasm"/>
    <property type="evidence" value="ECO:0000250"/>
    <property type="project" value="UniProtKB"/>
</dbReference>
<dbReference type="GO" id="GO:0090443">
    <property type="term" value="C:FAR/SIN/STRIPAK complex"/>
    <property type="evidence" value="ECO:0000250"/>
    <property type="project" value="UniProtKB"/>
</dbReference>
<dbReference type="GO" id="GO:0098978">
    <property type="term" value="C:glutamatergic synapse"/>
    <property type="evidence" value="ECO:0007669"/>
    <property type="project" value="Ensembl"/>
</dbReference>
<dbReference type="GO" id="GO:0005794">
    <property type="term" value="C:Golgi apparatus"/>
    <property type="evidence" value="ECO:0000250"/>
    <property type="project" value="UniProtKB"/>
</dbReference>
<dbReference type="GO" id="GO:0032580">
    <property type="term" value="C:Golgi cisterna membrane"/>
    <property type="evidence" value="ECO:0007669"/>
    <property type="project" value="UniProtKB-SubCell"/>
</dbReference>
<dbReference type="GO" id="GO:0048471">
    <property type="term" value="C:perinuclear region of cytoplasm"/>
    <property type="evidence" value="ECO:0007669"/>
    <property type="project" value="UniProtKB-SubCell"/>
</dbReference>
<dbReference type="GO" id="GO:0098794">
    <property type="term" value="C:postsynapse"/>
    <property type="evidence" value="ECO:0007669"/>
    <property type="project" value="Ensembl"/>
</dbReference>
<dbReference type="GO" id="GO:0019900">
    <property type="term" value="F:kinase binding"/>
    <property type="evidence" value="ECO:0000250"/>
    <property type="project" value="UniProtKB"/>
</dbReference>
<dbReference type="GO" id="GO:0046872">
    <property type="term" value="F:metal ion binding"/>
    <property type="evidence" value="ECO:0007669"/>
    <property type="project" value="UniProtKB-KW"/>
</dbReference>
<dbReference type="GO" id="GO:0030674">
    <property type="term" value="F:protein-macromolecule adaptor activity"/>
    <property type="evidence" value="ECO:0000250"/>
    <property type="project" value="UniProtKB"/>
</dbReference>
<dbReference type="GO" id="GO:0035331">
    <property type="term" value="P:negative regulation of hippo signaling"/>
    <property type="evidence" value="ECO:0000250"/>
    <property type="project" value="UniProtKB"/>
</dbReference>
<dbReference type="FunFam" id="1.20.140.30:FF:000002">
    <property type="entry name" value="MOB-like protein phocein isoform X1"/>
    <property type="match status" value="1"/>
</dbReference>
<dbReference type="Gene3D" id="1.20.140.30">
    <property type="entry name" value="MOB kinase activator"/>
    <property type="match status" value="1"/>
</dbReference>
<dbReference type="InterPro" id="IPR005301">
    <property type="entry name" value="MOB_kinase_act_fam"/>
</dbReference>
<dbReference type="InterPro" id="IPR036703">
    <property type="entry name" value="MOB_kinase_act_sf"/>
</dbReference>
<dbReference type="PANTHER" id="PTHR22599">
    <property type="entry name" value="MPS ONE BINDER KINASE ACTIVATOR-LIKE MOB"/>
    <property type="match status" value="1"/>
</dbReference>
<dbReference type="Pfam" id="PF03637">
    <property type="entry name" value="Mob1_phocein"/>
    <property type="match status" value="1"/>
</dbReference>
<dbReference type="SMART" id="SM01388">
    <property type="entry name" value="Mob1_phocein"/>
    <property type="match status" value="1"/>
</dbReference>
<dbReference type="SUPFAM" id="SSF101152">
    <property type="entry name" value="Mob1/phocein"/>
    <property type="match status" value="1"/>
</dbReference>
<sequence length="225" mass="26032">MVMAEGTAVLRRNRPGTKAQDFYNWPDESFDEMDSTLAVQQYIQQNIRADCSNIDKILEPPEGQDEGVWKYEHLRQFCLELNGLAVKLQSECHPDTCTQMTATEQWIFLCAAHKTPKECPAIDYTRHTLDGAACLLNSNKYFPSRVSIKESSVAKLGSVCRRIYRIFSHAYFHHRQIFDEYENETFLCHRFTKFVMKYNLMSKDNLIVPILEEEVQNSVSGESEA</sequence>
<gene>
    <name type="primary">MOB4</name>
    <name type="synonym">MOB3</name>
    <name type="synonym">MOBKL3</name>
    <name type="synonym">PHOCN</name>
    <name type="synonym">PREI3</name>
</gene>
<feature type="chain" id="PRO_0000247606" description="MOB-like protein phocein">
    <location>
        <begin position="1"/>
        <end position="225"/>
    </location>
</feature>
<feature type="binding site" evidence="2">
    <location>
        <position position="92"/>
    </location>
    <ligand>
        <name>Zn(2+)</name>
        <dbReference type="ChEBI" id="CHEBI:29105"/>
        <label>1</label>
    </ligand>
</feature>
<feature type="binding site" evidence="1">
    <location>
        <position position="92"/>
    </location>
    <ligand>
        <name>Zn(2+)</name>
        <dbReference type="ChEBI" id="CHEBI:29105"/>
    </ligand>
</feature>
<feature type="binding site" evidence="2">
    <location>
        <position position="97"/>
    </location>
    <ligand>
        <name>Zn(2+)</name>
        <dbReference type="ChEBI" id="CHEBI:29105"/>
        <label>1</label>
    </ligand>
</feature>
<feature type="binding site" evidence="1">
    <location>
        <position position="97"/>
    </location>
    <ligand>
        <name>Zn(2+)</name>
        <dbReference type="ChEBI" id="CHEBI:29105"/>
    </ligand>
</feature>
<feature type="binding site" evidence="2">
    <location>
        <position position="110"/>
    </location>
    <ligand>
        <name>Zn(2+)</name>
        <dbReference type="ChEBI" id="CHEBI:29105"/>
        <label>2</label>
    </ligand>
</feature>
<feature type="binding site" evidence="2">
    <location>
        <position position="113"/>
    </location>
    <ligand>
        <name>Zn(2+)</name>
        <dbReference type="ChEBI" id="CHEBI:29105"/>
        <label>2</label>
    </ligand>
</feature>
<feature type="binding site" evidence="2">
    <location>
        <position position="119"/>
    </location>
    <ligand>
        <name>Zn(2+)</name>
        <dbReference type="ChEBI" id="CHEBI:29105"/>
        <label>2</label>
    </ligand>
</feature>
<feature type="binding site" evidence="2">
    <location>
        <position position="127"/>
    </location>
    <ligand>
        <name>Zn(2+)</name>
        <dbReference type="ChEBI" id="CHEBI:29105"/>
        <label>2</label>
    </ligand>
</feature>
<feature type="binding site" evidence="2">
    <location>
        <position position="169"/>
    </location>
    <ligand>
        <name>Zn(2+)</name>
        <dbReference type="ChEBI" id="CHEBI:29105"/>
        <label>1</label>
    </ligand>
</feature>
<feature type="binding site" evidence="1">
    <location>
        <position position="169"/>
    </location>
    <ligand>
        <name>Zn(2+)</name>
        <dbReference type="ChEBI" id="CHEBI:29105"/>
    </ligand>
</feature>
<feature type="binding site" evidence="2">
    <location>
        <position position="174"/>
    </location>
    <ligand>
        <name>Zn(2+)</name>
        <dbReference type="ChEBI" id="CHEBI:29105"/>
        <label>1</label>
    </ligand>
</feature>
<feature type="binding site" evidence="1">
    <location>
        <position position="174"/>
    </location>
    <ligand>
        <name>Zn(2+)</name>
        <dbReference type="ChEBI" id="CHEBI:29105"/>
    </ligand>
</feature>
<feature type="splice variant" id="VSP_020022" description="In isoform 2." evidence="3">
    <location>
        <begin position="20"/>
        <end position="40"/>
    </location>
</feature>
<feature type="sequence conflict" description="In Ref. 1; CAH90246." evidence="4" ref="1">
    <original>V</original>
    <variation>L</variation>
    <location>
        <position position="9"/>
    </location>
</feature>
<feature type="sequence conflict" description="In Ref. 1; CAH91902." evidence="4" ref="1">
    <original>N</original>
    <variation>D</variation>
    <location>
        <position position="137"/>
    </location>
</feature>
<comment type="function">
    <text evidence="2">Part of the striatin-interacting phosphatase and kinase (STRIPAK) complexes. STRIPAK complexes have critical roles in protein (de)phosphorylation and are regulators of multiple signaling pathways including Hippo, MAPK, nuclear receptor and cytoskeleton remodeling. Different types of STRIPAK complexes are involved in a variety of biological processes such as cell growth, differentiation, apoptosis, metabolism and immune regulation.</text>
</comment>
<comment type="subunit">
    <text evidence="1 2">Binds STRN4 (By similarity). Interacts with DNM1 and EPS15 (By similarity). Interacts with nucleoside diphosphate kinase (By similarity). Interacts with CTTNBP2 (By similarity). Interacts with CTTNBP2NL (By similarity). Part of the core of STRIPAK complexes composed of PP2A catalytic and scaffolding subunits, the striatins (PP2A regulatory subunits), the striatin-associated proteins MOB4, STRIP1 and STRIP2, PDCD10 and members of the STE20 kinases, such as STK24 and STK26 (By similarity).</text>
</comment>
<comment type="subcellular location">
    <subcellularLocation>
        <location>Cytoplasm</location>
        <location>Perinuclear region</location>
    </subcellularLocation>
    <subcellularLocation>
        <location>Membrane</location>
        <topology>Peripheral membrane protein</topology>
    </subcellularLocation>
    <subcellularLocation>
        <location evidence="1">Golgi apparatus</location>
        <location evidence="1">Golgi stack membrane</location>
        <topology evidence="1">Peripheral membrane protein</topology>
    </subcellularLocation>
</comment>
<comment type="alternative products">
    <event type="alternative splicing"/>
    <isoform>
        <id>Q5RDB1-1</id>
        <name>1</name>
        <sequence type="displayed"/>
    </isoform>
    <isoform>
        <id>Q5RDB1-2</id>
        <name>2</name>
        <sequence type="described" ref="VSP_020022"/>
    </isoform>
</comment>
<comment type="PTM">
    <text evidence="1">Phosphorylated on serine residues.</text>
</comment>
<comment type="similarity">
    <text evidence="4">Belongs to the MOB1/phocein family.</text>
</comment>